<name>ERG3A_ASPFU</name>
<feature type="chain" id="PRO_0000454124" description="Delta(7)-sterol 5(6)-desaturas erg3A">
    <location>
        <begin position="1"/>
        <end position="352"/>
    </location>
</feature>
<feature type="transmembrane region" description="Helical" evidence="2">
    <location>
        <begin position="82"/>
        <end position="102"/>
    </location>
</feature>
<feature type="transmembrane region" description="Helical" evidence="2">
    <location>
        <begin position="128"/>
        <end position="147"/>
    </location>
</feature>
<feature type="transmembrane region" description="Helical" evidence="2">
    <location>
        <begin position="167"/>
        <end position="187"/>
    </location>
</feature>
<feature type="transmembrane region" description="Helical" evidence="2">
    <location>
        <begin position="231"/>
        <end position="251"/>
    </location>
</feature>
<feature type="domain" description="Fatty acid hydroxylase" evidence="2">
    <location>
        <begin position="174"/>
        <end position="299"/>
    </location>
</feature>
<feature type="short sequence motif" description="Histidine box-1" evidence="1">
    <location>
        <begin position="188"/>
        <end position="192"/>
    </location>
</feature>
<feature type="short sequence motif" description="Histidine box-2" evidence="1">
    <location>
        <begin position="201"/>
        <end position="205"/>
    </location>
</feature>
<feature type="short sequence motif" description="Histidine box-3" evidence="1">
    <location>
        <begin position="276"/>
        <end position="280"/>
    </location>
</feature>
<feature type="glycosylation site" description="N-linked (GlcNAc...) asparagine" evidence="3">
    <location>
        <position position="39"/>
    </location>
</feature>
<comment type="function">
    <text evidence="4 5 9 10">Delta(7)-sterol 5(6)-desaturase; part of the third module of ergosterol biosynthesis pathway that includes the late steps of the pathway (PubMed:16436696, PubMed:18191972). Erg3A is a minor delta(7)-sterol 5(6)-desaturase within the ergosterol pathway, erg3B being the major one (PubMed:16436696, PubMed:18191972). The third module or late pathway involves the ergosterol synthesis itself through consecutive reactions that mainly occur in the endoplasmic reticulum (ER) membrane. Firstly, the squalene synthase erg9 catalyzes the condensation of 2 farnesyl pyrophosphate moieties to form squalene, which is the precursor of all steroids. Squalene synthase is crucial for balancing the incorporation of farnesyl diphosphate (FPP) into sterol and nonsterol isoprene synthesis. Secondly, squalene is converted into lanosterol by the consecutive action of the squalene epoxidase erg1 and the lanosterol synthase erg7. Then, the delta(24)-sterol C-methyltransferase erg6 methylates lanosterol at C-24 to produce eburicol. Eburicol is the substrate of the sterol 14-alpha demethylase encoded by cyp51A and cyp51B, to yield 4,4,24-trimethyl ergosta-8,14,24(28)-trienol. The C-14 reductase erg24 then reduces the C14=C15 double bond which leads to 4,4-dimethylfecosterol. A sequence of further demethylations at C-4, involving the C-4 demethylation complex containing the C-4 methylsterol oxidases erg25A or erg25B, the sterol-4-alpha-carboxylate 3-dehydrogenase erg26 and the 3-keto-steroid reductase erg27, leads to the production of fecosterol via 4-methylfecosterol. The C-8 sterol isomerase erg2 then catalyzes the reaction which results in unsaturation at C-7 in the B ring of sterols and thus converts fecosterol to episterol. The sterol-C5-desaturase erg3B then catalyzes the introduction of a C-5 double bond in the B ring to produce 5-dehydroepisterol. The 2 other sterol-C5-desaturases, erg3A and erg3C, seem to be less important in ergosterol biosynthesis. The C-22 sterol desaturase erg5 further converts 5-dehydroepisterol into ergosta-5,7,22,24(28)-tetraen-3beta-ol by forming the C-22(23) double bond in the sterol side chain. Finally, ergosta-5,7,22,24(28)-tetraen-3beta-ol is substrate of the C-24(28) sterol reductases erg4A and erg4B to produce ergosterol. Possible alternative sterol biosynthetic pathways might exist from fecosterol to ergosterol, depending on the activities of the erg3 isoforms (Probable) (PubMed:16110826, PubMed:18191972).</text>
</comment>
<comment type="cofactor">
    <cofactor evidence="1">
        <name>Fe cation</name>
        <dbReference type="ChEBI" id="CHEBI:24875"/>
    </cofactor>
</comment>
<comment type="subcellular location">
    <subcellularLocation>
        <location evidence="8">Endoplasmic reticulum membrane</location>
        <topology evidence="2">Multi-pass membrane protein</topology>
    </subcellularLocation>
</comment>
<comment type="domain">
    <text evidence="1">The histidine box domains may contain the active site and/or be involved in metal ion binding.</text>
</comment>
<comment type="disruption phenotype">
    <text evidence="4">Does not affect the susceptibility to amphotericin B, itraconazole, fluconazole, voriconazole, and ketoconazole.</text>
</comment>
<comment type="miscellaneous">
    <text evidence="10">In Aspergillus, the biosynthesis pathway of the sterol precursors leading to the prevalent sterol ergosterol differs from yeast. The ring system of lanosterol in S.cerevisiae is firstly demethylised in three enzymatic steps leading to the intermediate zymosterol and secondly a methyl group is added to zymosterol by the sterol 24-C-methyltransferase to form fecosterol. In Aspergillus, lanosterol is firstly transmethylated by the sterol 24-C-methyltransferase leading to the intermediate eburicol and secondly demethylated in three steps to form fecosterol.</text>
</comment>
<comment type="similarity">
    <text evidence="8">Belongs to the sterol desaturase family.</text>
</comment>
<accession>Q4WDL3</accession>
<accession>Q2VWQ6</accession>
<protein>
    <recommendedName>
        <fullName evidence="6">Delta(7)-sterol 5(6)-desaturas erg3A</fullName>
        <ecNumber evidence="9">1.14.19.-</ecNumber>
    </recommendedName>
    <alternativeName>
        <fullName evidence="6">C-5 sterol desaturase erg3A</fullName>
    </alternativeName>
    <alternativeName>
        <fullName evidence="8">Ergosterol Delta(5,6) desaturase erg3A</fullName>
    </alternativeName>
    <alternativeName>
        <fullName evidence="7">Ergosterol biosynthesis protein 3A</fullName>
    </alternativeName>
    <alternativeName>
        <fullName evidence="8">Sterol-C5-desaturase erg3A</fullName>
    </alternativeName>
</protein>
<dbReference type="EC" id="1.14.19.-" evidence="9"/>
<dbReference type="EMBL" id="AAHF01000012">
    <property type="protein sequence ID" value="EAL85525.1"/>
    <property type="molecule type" value="Genomic_DNA"/>
</dbReference>
<dbReference type="RefSeq" id="XP_747563.1">
    <property type="nucleotide sequence ID" value="XM_742470.1"/>
</dbReference>
<dbReference type="FunCoup" id="Q4WDL3">
    <property type="interactions" value="182"/>
</dbReference>
<dbReference type="STRING" id="330879.Q4WDL3"/>
<dbReference type="GlyCosmos" id="Q4WDL3">
    <property type="glycosylation" value="1 site, No reported glycans"/>
</dbReference>
<dbReference type="EnsemblFungi" id="EAL85525">
    <property type="protein sequence ID" value="EAL85525"/>
    <property type="gene ID" value="AFUA_6G05140"/>
</dbReference>
<dbReference type="GeneID" id="3505076"/>
<dbReference type="KEGG" id="afm:AFUA_6G05140"/>
<dbReference type="VEuPathDB" id="FungiDB:Afu6g05140"/>
<dbReference type="eggNOG" id="KOG0872">
    <property type="taxonomic scope" value="Eukaryota"/>
</dbReference>
<dbReference type="HOGENOM" id="CLU_047036_3_0_1"/>
<dbReference type="InParanoid" id="Q4WDL3"/>
<dbReference type="OMA" id="GPGLWYN"/>
<dbReference type="OrthoDB" id="6354873at2759"/>
<dbReference type="Proteomes" id="UP000002530">
    <property type="component" value="Chromosome 6"/>
</dbReference>
<dbReference type="GO" id="GO:0005789">
    <property type="term" value="C:endoplasmic reticulum membrane"/>
    <property type="evidence" value="ECO:0007669"/>
    <property type="project" value="UniProtKB-SubCell"/>
</dbReference>
<dbReference type="GO" id="GO:0016020">
    <property type="term" value="C:membrane"/>
    <property type="evidence" value="ECO:0000318"/>
    <property type="project" value="GO_Central"/>
</dbReference>
<dbReference type="GO" id="GO:0000248">
    <property type="term" value="F:C-5 sterol desaturase activity"/>
    <property type="evidence" value="ECO:0000318"/>
    <property type="project" value="GO_Central"/>
</dbReference>
<dbReference type="GO" id="GO:0005506">
    <property type="term" value="F:iron ion binding"/>
    <property type="evidence" value="ECO:0007669"/>
    <property type="project" value="InterPro"/>
</dbReference>
<dbReference type="GO" id="GO:0016126">
    <property type="term" value="P:sterol biosynthetic process"/>
    <property type="evidence" value="ECO:0000318"/>
    <property type="project" value="GO_Central"/>
</dbReference>
<dbReference type="InterPro" id="IPR006694">
    <property type="entry name" value="Fatty_acid_hydroxylase"/>
</dbReference>
<dbReference type="InterPro" id="IPR050307">
    <property type="entry name" value="Sterol_Desaturase_Related"/>
</dbReference>
<dbReference type="PANTHER" id="PTHR11863">
    <property type="entry name" value="STEROL DESATURASE"/>
    <property type="match status" value="1"/>
</dbReference>
<dbReference type="Pfam" id="PF04116">
    <property type="entry name" value="FA_hydroxylase"/>
    <property type="match status" value="1"/>
</dbReference>
<proteinExistence type="inferred from homology"/>
<reference key="1">
    <citation type="journal article" date="2005" name="Nature">
        <title>Genomic sequence of the pathogenic and allergenic filamentous fungus Aspergillus fumigatus.</title>
        <authorList>
            <person name="Nierman W.C."/>
            <person name="Pain A."/>
            <person name="Anderson M.J."/>
            <person name="Wortman J.R."/>
            <person name="Kim H.S."/>
            <person name="Arroyo J."/>
            <person name="Berriman M."/>
            <person name="Abe K."/>
            <person name="Archer D.B."/>
            <person name="Bermejo C."/>
            <person name="Bennett J.W."/>
            <person name="Bowyer P."/>
            <person name="Chen D."/>
            <person name="Collins M."/>
            <person name="Coulsen R."/>
            <person name="Davies R."/>
            <person name="Dyer P.S."/>
            <person name="Farman M.L."/>
            <person name="Fedorova N."/>
            <person name="Fedorova N.D."/>
            <person name="Feldblyum T.V."/>
            <person name="Fischer R."/>
            <person name="Fosker N."/>
            <person name="Fraser A."/>
            <person name="Garcia J.L."/>
            <person name="Garcia M.J."/>
            <person name="Goble A."/>
            <person name="Goldman G.H."/>
            <person name="Gomi K."/>
            <person name="Griffith-Jones S."/>
            <person name="Gwilliam R."/>
            <person name="Haas B.J."/>
            <person name="Haas H."/>
            <person name="Harris D.E."/>
            <person name="Horiuchi H."/>
            <person name="Huang J."/>
            <person name="Humphray S."/>
            <person name="Jimenez J."/>
            <person name="Keller N."/>
            <person name="Khouri H."/>
            <person name="Kitamoto K."/>
            <person name="Kobayashi T."/>
            <person name="Konzack S."/>
            <person name="Kulkarni R."/>
            <person name="Kumagai T."/>
            <person name="Lafton A."/>
            <person name="Latge J.-P."/>
            <person name="Li W."/>
            <person name="Lord A."/>
            <person name="Lu C."/>
            <person name="Majoros W.H."/>
            <person name="May G.S."/>
            <person name="Miller B.L."/>
            <person name="Mohamoud Y."/>
            <person name="Molina M."/>
            <person name="Monod M."/>
            <person name="Mouyna I."/>
            <person name="Mulligan S."/>
            <person name="Murphy L.D."/>
            <person name="O'Neil S."/>
            <person name="Paulsen I."/>
            <person name="Penalva M.A."/>
            <person name="Pertea M."/>
            <person name="Price C."/>
            <person name="Pritchard B.L."/>
            <person name="Quail M.A."/>
            <person name="Rabbinowitsch E."/>
            <person name="Rawlins N."/>
            <person name="Rajandream M.A."/>
            <person name="Reichard U."/>
            <person name="Renauld H."/>
            <person name="Robson G.D."/>
            <person name="Rodriguez de Cordoba S."/>
            <person name="Rodriguez-Pena J.M."/>
            <person name="Ronning C.M."/>
            <person name="Rutter S."/>
            <person name="Salzberg S.L."/>
            <person name="Sanchez M."/>
            <person name="Sanchez-Ferrero J.C."/>
            <person name="Saunders D."/>
            <person name="Seeger K."/>
            <person name="Squares R."/>
            <person name="Squares S."/>
            <person name="Takeuchi M."/>
            <person name="Tekaia F."/>
            <person name="Turner G."/>
            <person name="Vazquez de Aldana C.R."/>
            <person name="Weidman J."/>
            <person name="White O."/>
            <person name="Woodward J.R."/>
            <person name="Yu J.-H."/>
            <person name="Fraser C.M."/>
            <person name="Galagan J.E."/>
            <person name="Asai K."/>
            <person name="Machida M."/>
            <person name="Hall N."/>
            <person name="Barrell B.G."/>
            <person name="Denning D.W."/>
        </authorList>
    </citation>
    <scope>NUCLEOTIDE SEQUENCE [LARGE SCALE GENOMIC DNA]</scope>
    <source>
        <strain>ATCC MYA-4609 / CBS 101355 / FGSC A1100 / Af293</strain>
    </source>
</reference>
<reference key="2">
    <citation type="journal article" date="2005" name="Med. Mycol.">
        <title>The ergosterol biosynthesis pathway, transporter genes, and azole resistance in Aspergillus fumigatus.</title>
        <authorList>
            <person name="Ferreira M.E."/>
            <person name="Colombo A.L."/>
            <person name="Paulsen I."/>
            <person name="Ren Q."/>
            <person name="Wortman J."/>
            <person name="Huang J."/>
            <person name="Goldman M.H."/>
            <person name="Goldman G.H."/>
        </authorList>
    </citation>
    <scope>IDENTIFICATION</scope>
    <scope>FUNCTION</scope>
</reference>
<reference key="3">
    <citation type="journal article" date="2006" name="Antimicrob. Agents Chemother.">
        <title>Aspergillus fumigatus C-5 sterol desaturases Erg3A and Erg3B: role in sterol biosynthesis and antifungal drug susceptibility.</title>
        <authorList>
            <person name="Alcazar-Fuoli L."/>
            <person name="Mellado E."/>
            <person name="Garcia-Effron G."/>
            <person name="Buitrago M.J."/>
            <person name="Lopez J.F."/>
            <person name="Grimalt J.O."/>
            <person name="Cuenca-Estrella J.M."/>
            <person name="Rodriguez-Tudela J.L."/>
        </authorList>
    </citation>
    <scope>FUNCTION</scope>
</reference>
<reference key="4">
    <citation type="journal article" date="2008" name="Steroids">
        <title>Ergosterol biosynthesis pathway in Aspergillus fumigatus.</title>
        <authorList>
            <person name="Alcazar-Fuoli L."/>
            <person name="Mellado E."/>
            <person name="Garcia-Effron G."/>
            <person name="Lopez J.F."/>
            <person name="Grimalt J.O."/>
            <person name="Cuenca-Estrella J.M."/>
            <person name="Rodriguez-Tudela J.L."/>
        </authorList>
    </citation>
    <scope>FUNCTION</scope>
    <scope>DISRUPTION PHENOTYPE</scope>
</reference>
<gene>
    <name evidence="7" type="primary">erg3A</name>
    <name type="ORF">AFUA_6G05140</name>
</gene>
<organism>
    <name type="scientific">Aspergillus fumigatus (strain ATCC MYA-4609 / CBS 101355 / FGSC A1100 / Af293)</name>
    <name type="common">Neosartorya fumigata</name>
    <dbReference type="NCBI Taxonomy" id="330879"/>
    <lineage>
        <taxon>Eukaryota</taxon>
        <taxon>Fungi</taxon>
        <taxon>Dikarya</taxon>
        <taxon>Ascomycota</taxon>
        <taxon>Pezizomycotina</taxon>
        <taxon>Eurotiomycetes</taxon>
        <taxon>Eurotiomycetidae</taxon>
        <taxon>Eurotiales</taxon>
        <taxon>Aspergillaceae</taxon>
        <taxon>Aspergillus</taxon>
        <taxon>Aspergillus subgen. Fumigati</taxon>
    </lineage>
</organism>
<keyword id="KW-0256">Endoplasmic reticulum</keyword>
<keyword id="KW-0325">Glycoprotein</keyword>
<keyword id="KW-0444">Lipid biosynthesis</keyword>
<keyword id="KW-0443">Lipid metabolism</keyword>
<keyword id="KW-0472">Membrane</keyword>
<keyword id="KW-0560">Oxidoreductase</keyword>
<keyword id="KW-1185">Reference proteome</keyword>
<keyword id="KW-0752">Steroid biosynthesis</keyword>
<keyword id="KW-0753">Steroid metabolism</keyword>
<keyword id="KW-0756">Sterol biosynthesis</keyword>
<keyword id="KW-1207">Sterol metabolism</keyword>
<keyword id="KW-0812">Transmembrane</keyword>
<keyword id="KW-1133">Transmembrane helix</keyword>
<sequence length="352" mass="41243">MDIVLEIWDTFIGDRVYSALLPLSLSSTVSLPGLTNAANSSLSLFGASKPFVYEPATQLFRLEPSKYAYLSAWPRNNIYRQFLSFFLIVWIFGIIVYFISATLSYIFIWDKTTVKHPKFLKNQIPMEIAQTMRSMPVMSLLTAPFLVAEVRGYAKLYDSVDEEPFPYYSILQFPLFIAFTDFCIYWIHRGLHHPLIYKSLHKPHHKWIMPSPFASHAFHPLDGWSQSVPYHVFPFIFPLQKLAYVFLFGFINLWTVMIHDGEYVANSPIINGAACHTMHHLYFNYNYGQFTTLWDRLGGSYRKPNEELFRRETKMDEAEWKRQTKEMETILKTVEGEDDRKYLSQEEAKKDL</sequence>
<evidence type="ECO:0000250" key="1">
    <source>
        <dbReference type="UniProtKB" id="P53045"/>
    </source>
</evidence>
<evidence type="ECO:0000255" key="2"/>
<evidence type="ECO:0000255" key="3">
    <source>
        <dbReference type="PROSITE-ProRule" id="PRU00498"/>
    </source>
</evidence>
<evidence type="ECO:0000269" key="4">
    <source>
    </source>
</evidence>
<evidence type="ECO:0000269" key="5">
    <source>
    </source>
</evidence>
<evidence type="ECO:0000303" key="6">
    <source>
    </source>
</evidence>
<evidence type="ECO:0000303" key="7">
    <source>
    </source>
</evidence>
<evidence type="ECO:0000305" key="8"/>
<evidence type="ECO:0000305" key="9">
    <source>
    </source>
</evidence>
<evidence type="ECO:0000305" key="10">
    <source>
    </source>
</evidence>